<comment type="function">
    <text evidence="1">Protein S19 forms a complex with S13 that binds strongly to the 16S ribosomal RNA.</text>
</comment>
<comment type="similarity">
    <text evidence="1">Belongs to the universal ribosomal protein uS19 family.</text>
</comment>
<dbReference type="EMBL" id="CP001157">
    <property type="protein sequence ID" value="ACO76880.1"/>
    <property type="molecule type" value="Genomic_DNA"/>
</dbReference>
<dbReference type="RefSeq" id="WP_012699306.1">
    <property type="nucleotide sequence ID" value="NZ_CP144736.1"/>
</dbReference>
<dbReference type="SMR" id="C1DKL7"/>
<dbReference type="STRING" id="322710.Avin_06290"/>
<dbReference type="EnsemblBacteria" id="ACO76880">
    <property type="protein sequence ID" value="ACO76880"/>
    <property type="gene ID" value="Avin_06290"/>
</dbReference>
<dbReference type="GeneID" id="88184040"/>
<dbReference type="KEGG" id="avn:Avin_06290"/>
<dbReference type="eggNOG" id="COG0185">
    <property type="taxonomic scope" value="Bacteria"/>
</dbReference>
<dbReference type="HOGENOM" id="CLU_144911_0_1_6"/>
<dbReference type="OrthoDB" id="9797833at2"/>
<dbReference type="Proteomes" id="UP000002424">
    <property type="component" value="Chromosome"/>
</dbReference>
<dbReference type="GO" id="GO:0005737">
    <property type="term" value="C:cytoplasm"/>
    <property type="evidence" value="ECO:0007669"/>
    <property type="project" value="UniProtKB-ARBA"/>
</dbReference>
<dbReference type="GO" id="GO:0015935">
    <property type="term" value="C:small ribosomal subunit"/>
    <property type="evidence" value="ECO:0007669"/>
    <property type="project" value="InterPro"/>
</dbReference>
<dbReference type="GO" id="GO:0019843">
    <property type="term" value="F:rRNA binding"/>
    <property type="evidence" value="ECO:0007669"/>
    <property type="project" value="UniProtKB-UniRule"/>
</dbReference>
<dbReference type="GO" id="GO:0003735">
    <property type="term" value="F:structural constituent of ribosome"/>
    <property type="evidence" value="ECO:0007669"/>
    <property type="project" value="InterPro"/>
</dbReference>
<dbReference type="GO" id="GO:0000028">
    <property type="term" value="P:ribosomal small subunit assembly"/>
    <property type="evidence" value="ECO:0007669"/>
    <property type="project" value="TreeGrafter"/>
</dbReference>
<dbReference type="GO" id="GO:0006412">
    <property type="term" value="P:translation"/>
    <property type="evidence" value="ECO:0007669"/>
    <property type="project" value="UniProtKB-UniRule"/>
</dbReference>
<dbReference type="FunFam" id="3.30.860.10:FF:000001">
    <property type="entry name" value="30S ribosomal protein S19"/>
    <property type="match status" value="1"/>
</dbReference>
<dbReference type="Gene3D" id="3.30.860.10">
    <property type="entry name" value="30s Ribosomal Protein S19, Chain A"/>
    <property type="match status" value="1"/>
</dbReference>
<dbReference type="HAMAP" id="MF_00531">
    <property type="entry name" value="Ribosomal_uS19"/>
    <property type="match status" value="1"/>
</dbReference>
<dbReference type="InterPro" id="IPR002222">
    <property type="entry name" value="Ribosomal_uS19"/>
</dbReference>
<dbReference type="InterPro" id="IPR005732">
    <property type="entry name" value="Ribosomal_uS19_bac-type"/>
</dbReference>
<dbReference type="InterPro" id="IPR020934">
    <property type="entry name" value="Ribosomal_uS19_CS"/>
</dbReference>
<dbReference type="InterPro" id="IPR023575">
    <property type="entry name" value="Ribosomal_uS19_SF"/>
</dbReference>
<dbReference type="NCBIfam" id="TIGR01050">
    <property type="entry name" value="rpsS_bact"/>
    <property type="match status" value="1"/>
</dbReference>
<dbReference type="PANTHER" id="PTHR11880">
    <property type="entry name" value="RIBOSOMAL PROTEIN S19P FAMILY MEMBER"/>
    <property type="match status" value="1"/>
</dbReference>
<dbReference type="PANTHER" id="PTHR11880:SF8">
    <property type="entry name" value="SMALL RIBOSOMAL SUBUNIT PROTEIN US19M"/>
    <property type="match status" value="1"/>
</dbReference>
<dbReference type="Pfam" id="PF00203">
    <property type="entry name" value="Ribosomal_S19"/>
    <property type="match status" value="1"/>
</dbReference>
<dbReference type="PIRSF" id="PIRSF002144">
    <property type="entry name" value="Ribosomal_S19"/>
    <property type="match status" value="1"/>
</dbReference>
<dbReference type="PRINTS" id="PR00975">
    <property type="entry name" value="RIBOSOMALS19"/>
</dbReference>
<dbReference type="SUPFAM" id="SSF54570">
    <property type="entry name" value="Ribosomal protein S19"/>
    <property type="match status" value="1"/>
</dbReference>
<dbReference type="PROSITE" id="PS00323">
    <property type="entry name" value="RIBOSOMAL_S19"/>
    <property type="match status" value="1"/>
</dbReference>
<evidence type="ECO:0000255" key="1">
    <source>
        <dbReference type="HAMAP-Rule" id="MF_00531"/>
    </source>
</evidence>
<evidence type="ECO:0000305" key="2"/>
<organism>
    <name type="scientific">Azotobacter vinelandii (strain DJ / ATCC BAA-1303)</name>
    <dbReference type="NCBI Taxonomy" id="322710"/>
    <lineage>
        <taxon>Bacteria</taxon>
        <taxon>Pseudomonadati</taxon>
        <taxon>Pseudomonadota</taxon>
        <taxon>Gammaproteobacteria</taxon>
        <taxon>Pseudomonadales</taxon>
        <taxon>Pseudomonadaceae</taxon>
        <taxon>Azotobacter</taxon>
    </lineage>
</organism>
<reference key="1">
    <citation type="journal article" date="2009" name="J. Bacteriol.">
        <title>Genome sequence of Azotobacter vinelandii, an obligate aerobe specialized to support diverse anaerobic metabolic processes.</title>
        <authorList>
            <person name="Setubal J.C."/>
            <person name="Dos Santos P."/>
            <person name="Goldman B.S."/>
            <person name="Ertesvaag H."/>
            <person name="Espin G."/>
            <person name="Rubio L.M."/>
            <person name="Valla S."/>
            <person name="Almeida N.F."/>
            <person name="Balasubramanian D."/>
            <person name="Cromes L."/>
            <person name="Curatti L."/>
            <person name="Du Z."/>
            <person name="Godsy E."/>
            <person name="Goodner B."/>
            <person name="Hellner-Burris K."/>
            <person name="Hernandez J.A."/>
            <person name="Houmiel K."/>
            <person name="Imperial J."/>
            <person name="Kennedy C."/>
            <person name="Larson T.J."/>
            <person name="Latreille P."/>
            <person name="Ligon L.S."/>
            <person name="Lu J."/>
            <person name="Maerk M."/>
            <person name="Miller N.M."/>
            <person name="Norton S."/>
            <person name="O'Carroll I.P."/>
            <person name="Paulsen I."/>
            <person name="Raulfs E.C."/>
            <person name="Roemer R."/>
            <person name="Rosser J."/>
            <person name="Segura D."/>
            <person name="Slater S."/>
            <person name="Stricklin S.L."/>
            <person name="Studholme D.J."/>
            <person name="Sun J."/>
            <person name="Viana C.J."/>
            <person name="Wallin E."/>
            <person name="Wang B."/>
            <person name="Wheeler C."/>
            <person name="Zhu H."/>
            <person name="Dean D.R."/>
            <person name="Dixon R."/>
            <person name="Wood D."/>
        </authorList>
    </citation>
    <scope>NUCLEOTIDE SEQUENCE [LARGE SCALE GENOMIC DNA]</scope>
    <source>
        <strain>DJ / ATCC BAA-1303</strain>
    </source>
</reference>
<name>RS19_AZOVD</name>
<proteinExistence type="inferred from homology"/>
<feature type="chain" id="PRO_1000211795" description="Small ribosomal subunit protein uS19">
    <location>
        <begin position="1"/>
        <end position="91"/>
    </location>
</feature>
<accession>C1DKL7</accession>
<sequence>MPRSLKKGPFIDLHLLKKVEVAVEKNDRKPVKTWSRRSMILPQMVGLTIAVHNGRQHVPVLISEDMVGHKLGEFAATRTYRGHAADKKAKR</sequence>
<gene>
    <name evidence="1" type="primary">rpsS</name>
    <name type="ordered locus">Avin_06290</name>
</gene>
<keyword id="KW-0687">Ribonucleoprotein</keyword>
<keyword id="KW-0689">Ribosomal protein</keyword>
<keyword id="KW-0694">RNA-binding</keyword>
<keyword id="KW-0699">rRNA-binding</keyword>
<protein>
    <recommendedName>
        <fullName evidence="1">Small ribosomal subunit protein uS19</fullName>
    </recommendedName>
    <alternativeName>
        <fullName evidence="2">30S ribosomal protein S19</fullName>
    </alternativeName>
</protein>